<sequence>MEILYNIFTVFFNQVMTNAPLLLGIVTCLGYILLRKSVSVIIKGTIKTIIGFMLLQAGSGILTSTFKPVVAKMSEVYGINGAISDTYASMMATIDRMGDAYSWVGYAVLLALALNICYVLLRRITGIRTIMLTGHIMFQQAGLIAVTLFIFGYSMWTTIICTAILVSLYWGITSNMMYKPTQEVTDGCGFSIGHQQQFASWIAYKVAPFLGKKEESVEDLKLPGWLNIFHDNIVSTAIVMTIFFGAILLSFGIDTVQAMAGKVHWTVYILQTGFSFAVAIFIITQGVRMFVAELSEAFNGISQRLIPGAVLAIDCAAIYSFAPNAVVWGFMWGTIGQLIAVGILVACGSSILIIPGFIPMFFSNATIGVFANHFGGWRAALKICLVMGMIEIFGCVWAVKLTGMSAWMGMADWSILAPPMMQGFFSIGIAFMAVIIVIALAYMFFAGRALRAEEDAEKQLAEQSA</sequence>
<dbReference type="EMBL" id="U14003">
    <property type="protein sequence ID" value="AAA97089.1"/>
    <property type="status" value="ALT_INIT"/>
    <property type="molecule type" value="Genomic_DNA"/>
</dbReference>
<dbReference type="EMBL" id="U00096">
    <property type="protein sequence ID" value="AAC77150.2"/>
    <property type="molecule type" value="Genomic_DNA"/>
</dbReference>
<dbReference type="EMBL" id="AP009048">
    <property type="protein sequence ID" value="BAE78194.1"/>
    <property type="molecule type" value="Genomic_DNA"/>
</dbReference>
<dbReference type="PIR" id="D65230">
    <property type="entry name" value="D65230"/>
</dbReference>
<dbReference type="RefSeq" id="NP_418614.4">
    <property type="nucleotide sequence ID" value="NC_000913.3"/>
</dbReference>
<dbReference type="RefSeq" id="WP_001350568.1">
    <property type="nucleotide sequence ID" value="NZ_LN832404.1"/>
</dbReference>
<dbReference type="PDB" id="4RP8">
    <property type="method" value="X-ray"/>
    <property type="resolution" value="2.36 A"/>
    <property type="chains" value="A/C=1-465"/>
</dbReference>
<dbReference type="PDB" id="4RP9">
    <property type="method" value="X-ray"/>
    <property type="resolution" value="1.65 A"/>
    <property type="chains" value="A=1-465"/>
</dbReference>
<dbReference type="PDBsum" id="4RP8"/>
<dbReference type="PDBsum" id="4RP9"/>
<dbReference type="SMR" id="P39301"/>
<dbReference type="BioGRID" id="4262713">
    <property type="interactions" value="11"/>
</dbReference>
<dbReference type="ComplexPortal" id="CPX-5967">
    <property type="entry name" value="L-ascorbate-specific enzyme II complex"/>
</dbReference>
<dbReference type="DIP" id="DIP-10870N"/>
<dbReference type="FunCoup" id="P39301">
    <property type="interactions" value="125"/>
</dbReference>
<dbReference type="IntAct" id="P39301">
    <property type="interactions" value="1"/>
</dbReference>
<dbReference type="STRING" id="511145.b4193"/>
<dbReference type="TCDB" id="4.A.7.1.1">
    <property type="family name" value="the pts l-ascorbate (l-asc) family"/>
</dbReference>
<dbReference type="PaxDb" id="511145-b4193"/>
<dbReference type="EnsemblBacteria" id="AAC77150">
    <property type="protein sequence ID" value="AAC77150"/>
    <property type="gene ID" value="b4193"/>
</dbReference>
<dbReference type="GeneID" id="75169713"/>
<dbReference type="GeneID" id="948717"/>
<dbReference type="KEGG" id="ecj:JW5744"/>
<dbReference type="KEGG" id="eco:b4193"/>
<dbReference type="KEGG" id="ecoc:C3026_22650"/>
<dbReference type="PATRIC" id="fig|1411691.4.peg.2508"/>
<dbReference type="EchoBASE" id="EB2386"/>
<dbReference type="eggNOG" id="COG3037">
    <property type="taxonomic scope" value="Bacteria"/>
</dbReference>
<dbReference type="HOGENOM" id="CLU_031784_1_0_6"/>
<dbReference type="InParanoid" id="P39301"/>
<dbReference type="OMA" id="IAHQQMF"/>
<dbReference type="OrthoDB" id="9796178at2"/>
<dbReference type="PhylomeDB" id="P39301"/>
<dbReference type="BioCyc" id="EcoCyc:SGAT-MONOMER"/>
<dbReference type="BioCyc" id="MetaCyc:SGAT-MONOMER"/>
<dbReference type="BRENDA" id="2.7.1.194">
    <property type="organism ID" value="2026"/>
</dbReference>
<dbReference type="EvolutionaryTrace" id="P39301"/>
<dbReference type="PRO" id="PR:P39301"/>
<dbReference type="Proteomes" id="UP000000625">
    <property type="component" value="Chromosome"/>
</dbReference>
<dbReference type="GO" id="GO:0016020">
    <property type="term" value="C:membrane"/>
    <property type="evidence" value="ECO:0000314"/>
    <property type="project" value="EcoCyc"/>
</dbReference>
<dbReference type="GO" id="GO:0005886">
    <property type="term" value="C:plasma membrane"/>
    <property type="evidence" value="ECO:0000314"/>
    <property type="project" value="EcoCyc"/>
</dbReference>
<dbReference type="GO" id="GO:1902495">
    <property type="term" value="C:transmembrane transporter complex"/>
    <property type="evidence" value="ECO:0000303"/>
    <property type="project" value="ComplexPortal"/>
</dbReference>
<dbReference type="GO" id="GO:0042802">
    <property type="term" value="F:identical protein binding"/>
    <property type="evidence" value="ECO:0000353"/>
    <property type="project" value="IntAct"/>
</dbReference>
<dbReference type="GO" id="GO:0090585">
    <property type="term" value="F:protein-phosphocysteine-L-ascorbate-phosphotransferase system transporter activity"/>
    <property type="evidence" value="ECO:0000314"/>
    <property type="project" value="EcoCyc"/>
</dbReference>
<dbReference type="GO" id="GO:0015882">
    <property type="term" value="P:L-ascorbic acid transmembrane transport"/>
    <property type="evidence" value="ECO:0000315"/>
    <property type="project" value="EcoCyc"/>
</dbReference>
<dbReference type="GO" id="GO:0009401">
    <property type="term" value="P:phosphoenolpyruvate-dependent sugar phosphotransferase system"/>
    <property type="evidence" value="ECO:0000314"/>
    <property type="project" value="EcoCyc"/>
</dbReference>
<dbReference type="InterPro" id="IPR051562">
    <property type="entry name" value="Ascorbate-PTS_EIIC"/>
</dbReference>
<dbReference type="InterPro" id="IPR004703">
    <property type="entry name" value="PTS_sugar-sp_permease"/>
</dbReference>
<dbReference type="NCBIfam" id="NF006919">
    <property type="entry name" value="PRK09410.1-1"/>
    <property type="match status" value="1"/>
</dbReference>
<dbReference type="PANTHER" id="PTHR33843">
    <property type="entry name" value="ASCORBATE-SPECIFIC PTS SYSTEM EIIC COMPONENT"/>
    <property type="match status" value="1"/>
</dbReference>
<dbReference type="PANTHER" id="PTHR33843:SF4">
    <property type="entry name" value="ASCORBATE-SPECIFIC PTS SYSTEM EIIC COMPONENT"/>
    <property type="match status" value="1"/>
</dbReference>
<dbReference type="Pfam" id="PF03611">
    <property type="entry name" value="EIIC-GAT"/>
    <property type="match status" value="1"/>
</dbReference>
<keyword id="KW-0002">3D-structure</keyword>
<keyword id="KW-0997">Cell inner membrane</keyword>
<keyword id="KW-1003">Cell membrane</keyword>
<keyword id="KW-0472">Membrane</keyword>
<keyword id="KW-0598">Phosphotransferase system</keyword>
<keyword id="KW-1185">Reference proteome</keyword>
<keyword id="KW-0762">Sugar transport</keyword>
<keyword id="KW-0812">Transmembrane</keyword>
<keyword id="KW-1133">Transmembrane helix</keyword>
<keyword id="KW-0813">Transport</keyword>
<comment type="function">
    <text evidence="2 9">The phosphoenolpyruvate-dependent sugar phosphotransferase system (sugar PTS), a major carbohydrate active transport system, catalyzes the phosphorylation of incoming sugar substrates concomitantly with their translocation across the cell membrane. The enzyme II UlaABC PTS system is involved in ascorbate transport.</text>
</comment>
<comment type="biophysicochemical properties">
    <kinetics>
        <KM evidence="2">18 uM for L-ascorbate</KM>
    </kinetics>
</comment>
<comment type="subunit">
    <text evidence="5">Homodimer.</text>
</comment>
<comment type="interaction">
    <interactant intactId="EBI-556234">
        <id>P39301</id>
    </interactant>
    <interactant intactId="EBI-556234">
        <id>P39301</id>
        <label>ulaA</label>
    </interactant>
    <organismsDiffer>false</organismsDiffer>
    <experiments>2</experiments>
</comment>
<comment type="subcellular location">
    <subcellularLocation>
        <location evidence="4">Cell inner membrane</location>
        <topology evidence="4">Multi-pass membrane protein</topology>
    </subcellularLocation>
</comment>
<comment type="induction">
    <text evidence="1 2 3">Induced by L-ascorbate. Repressed by UlaR.</text>
</comment>
<comment type="domain">
    <text evidence="8">In classical PTS systems, the PTS EIIC type-2 domain forms the translocation channel and contains the specific substrate-binding site. UlaA does not exhibit the topological features of any recognized enzyme IIC.</text>
</comment>
<comment type="disruption phenotype">
    <text evidence="2">Cells lacking this gene are unable to use L-ascorbate.</text>
</comment>
<comment type="similarity">
    <text evidence="8">Belongs to the UlaA family.</text>
</comment>
<comment type="sequence caution" evidence="8">
    <conflict type="erroneous initiation">
        <sequence resource="EMBL-CDS" id="AAA97089"/>
    </conflict>
    <text>Extended N-terminus.</text>
</comment>
<protein>
    <recommendedName>
        <fullName evidence="7">Ascorbate-specific PTS system EIIC component</fullName>
    </recommendedName>
    <alternativeName>
        <fullName evidence="7">Ascorbate-specific permease IIC component UlaA</fullName>
    </alternativeName>
</protein>
<accession>P39301</accession>
<accession>Q2M6B2</accession>
<proteinExistence type="evidence at protein level"/>
<evidence type="ECO:0000269" key="1">
    <source>
    </source>
</evidence>
<evidence type="ECO:0000269" key="2">
    <source>
    </source>
</evidence>
<evidence type="ECO:0000269" key="3">
    <source>
    </source>
</evidence>
<evidence type="ECO:0000269" key="4">
    <source>
    </source>
</evidence>
<evidence type="ECO:0000269" key="5">
    <source>
    </source>
</evidence>
<evidence type="ECO:0000303" key="6">
    <source>
    </source>
</evidence>
<evidence type="ECO:0000303" key="7">
    <source>
    </source>
</evidence>
<evidence type="ECO:0000305" key="8"/>
<evidence type="ECO:0000305" key="9">
    <source>
    </source>
</evidence>
<evidence type="ECO:0000305" key="10">
    <source>
    </source>
</evidence>
<evidence type="ECO:0007829" key="11">
    <source>
        <dbReference type="PDB" id="4RP9"/>
    </source>
</evidence>
<organism>
    <name type="scientific">Escherichia coli (strain K12)</name>
    <dbReference type="NCBI Taxonomy" id="83333"/>
    <lineage>
        <taxon>Bacteria</taxon>
        <taxon>Pseudomonadati</taxon>
        <taxon>Pseudomonadota</taxon>
        <taxon>Gammaproteobacteria</taxon>
        <taxon>Enterobacterales</taxon>
        <taxon>Enterobacteriaceae</taxon>
        <taxon>Escherichia</taxon>
    </lineage>
</organism>
<feature type="chain" id="PRO_0000097714" description="Ascorbate-specific PTS system EIIC component">
    <location>
        <begin position="1"/>
        <end position="465"/>
    </location>
</feature>
<feature type="transmembrane region" description="Helical" evidence="10">
    <location>
        <begin position="14"/>
        <end position="34"/>
    </location>
</feature>
<feature type="transmembrane region" description="Helical" evidence="10">
    <location>
        <begin position="38"/>
        <end position="58"/>
    </location>
</feature>
<feature type="transmembrane region" description="Helical" evidence="10">
    <location>
        <begin position="101"/>
        <end position="121"/>
    </location>
</feature>
<feature type="transmembrane region" description="Helical" evidence="10">
    <location>
        <begin position="141"/>
        <end position="161"/>
    </location>
</feature>
<feature type="transmembrane region" description="Helical" evidence="10">
    <location>
        <begin position="233"/>
        <end position="253"/>
    </location>
</feature>
<feature type="transmembrane region" description="Helical" evidence="10">
    <location>
        <begin position="263"/>
        <end position="283"/>
    </location>
</feature>
<feature type="transmembrane region" description="Helical" evidence="10">
    <location>
        <begin position="316"/>
        <end position="336"/>
    </location>
</feature>
<feature type="transmembrane region" description="Helical" evidence="10">
    <location>
        <begin position="338"/>
        <end position="358"/>
    </location>
</feature>
<feature type="transmembrane region" description="Helical" evidence="10">
    <location>
        <begin position="379"/>
        <end position="399"/>
    </location>
</feature>
<feature type="transmembrane region" description="Helical" evidence="10">
    <location>
        <begin position="427"/>
        <end position="447"/>
    </location>
</feature>
<feature type="binding site" evidence="5">
    <location>
        <begin position="86"/>
        <end position="87"/>
    </location>
    <ligand>
        <name>L-ascorbate</name>
        <dbReference type="ChEBI" id="CHEBI:38290"/>
    </ligand>
</feature>
<feature type="binding site" evidence="5">
    <location>
        <begin position="135"/>
        <end position="139"/>
    </location>
    <ligand>
        <name>L-ascorbate</name>
        <dbReference type="ChEBI" id="CHEBI:38290"/>
    </ligand>
</feature>
<feature type="binding site" evidence="5">
    <location>
        <begin position="194"/>
        <end position="195"/>
    </location>
    <ligand>
        <name>L-ascorbate</name>
        <dbReference type="ChEBI" id="CHEBI:38290"/>
    </ligand>
</feature>
<feature type="binding site" evidence="5">
    <location>
        <position position="314"/>
    </location>
    <ligand>
        <name>L-ascorbate</name>
        <dbReference type="ChEBI" id="CHEBI:38290"/>
    </ligand>
</feature>
<feature type="sequence conflict" description="In Ref. 1; AAA97089." evidence="8" ref="1">
    <original>RAEEDAEKQLAEQSA</original>
    <variation>AQKKMQKNNWQNSLLNKEF</variation>
    <location>
        <begin position="451"/>
        <end position="465"/>
    </location>
</feature>
<feature type="turn" evidence="11">
    <location>
        <begin position="8"/>
        <end position="10"/>
    </location>
</feature>
<feature type="helix" evidence="11">
    <location>
        <begin position="11"/>
        <end position="14"/>
    </location>
</feature>
<feature type="turn" evidence="11">
    <location>
        <begin position="15"/>
        <end position="17"/>
    </location>
</feature>
<feature type="helix" evidence="11">
    <location>
        <begin position="19"/>
        <end position="33"/>
    </location>
</feature>
<feature type="helix" evidence="11">
    <location>
        <begin position="38"/>
        <end position="76"/>
    </location>
</feature>
<feature type="strand" evidence="11">
    <location>
        <begin position="81"/>
        <end position="84"/>
    </location>
</feature>
<feature type="helix" evidence="11">
    <location>
        <begin position="86"/>
        <end position="97"/>
    </location>
</feature>
<feature type="helix" evidence="11">
    <location>
        <begin position="98"/>
        <end position="101"/>
    </location>
</feature>
<feature type="helix" evidence="11">
    <location>
        <begin position="102"/>
        <end position="120"/>
    </location>
</feature>
<feature type="helix" evidence="11">
    <location>
        <begin position="122"/>
        <end position="125"/>
    </location>
</feature>
<feature type="strand" evidence="11">
    <location>
        <begin position="129"/>
        <end position="131"/>
    </location>
</feature>
<feature type="helix" evidence="11">
    <location>
        <begin position="134"/>
        <end position="150"/>
    </location>
</feature>
<feature type="helix" evidence="11">
    <location>
        <begin position="155"/>
        <end position="185"/>
    </location>
</feature>
<feature type="helix" evidence="11">
    <location>
        <begin position="197"/>
        <end position="206"/>
    </location>
</feature>
<feature type="helix" evidence="11">
    <location>
        <begin position="207"/>
        <end position="209"/>
    </location>
</feature>
<feature type="helix" evidence="11">
    <location>
        <begin position="213"/>
        <end position="215"/>
    </location>
</feature>
<feature type="turn" evidence="11">
    <location>
        <begin position="217"/>
        <end position="219"/>
    </location>
</feature>
<feature type="helix" evidence="11">
    <location>
        <begin position="224"/>
        <end position="230"/>
    </location>
</feature>
<feature type="helix" evidence="11">
    <location>
        <begin position="232"/>
        <end position="249"/>
    </location>
</feature>
<feature type="helix" evidence="11">
    <location>
        <begin position="253"/>
        <end position="260"/>
    </location>
</feature>
<feature type="helix" evidence="11">
    <location>
        <begin position="265"/>
        <end position="304"/>
    </location>
</feature>
<feature type="strand" evidence="11">
    <location>
        <begin position="310"/>
        <end position="313"/>
    </location>
</feature>
<feature type="helix" evidence="11">
    <location>
        <begin position="315"/>
        <end position="321"/>
    </location>
</feature>
<feature type="helix" evidence="11">
    <location>
        <begin position="323"/>
        <end position="346"/>
    </location>
</feature>
<feature type="strand" evidence="11">
    <location>
        <begin position="353"/>
        <end position="355"/>
    </location>
</feature>
<feature type="helix" evidence="11">
    <location>
        <begin position="357"/>
        <end position="402"/>
    </location>
</feature>
<feature type="strand" evidence="11">
    <location>
        <begin position="405"/>
        <end position="407"/>
    </location>
</feature>
<feature type="helix" evidence="11">
    <location>
        <begin position="412"/>
        <end position="415"/>
    </location>
</feature>
<feature type="helix" evidence="11">
    <location>
        <begin position="417"/>
        <end position="427"/>
    </location>
</feature>
<feature type="helix" evidence="11">
    <location>
        <begin position="428"/>
        <end position="430"/>
    </location>
</feature>
<feature type="helix" evidence="11">
    <location>
        <begin position="431"/>
        <end position="455"/>
    </location>
</feature>
<reference key="1">
    <citation type="journal article" date="1995" name="Nucleic Acids Res.">
        <title>Analysis of the Escherichia coli genome VI: DNA sequence of the region from 92.8 through 100 minutes.</title>
        <authorList>
            <person name="Burland V.D."/>
            <person name="Plunkett G. III"/>
            <person name="Sofia H.J."/>
            <person name="Daniels D.L."/>
            <person name="Blattner F.R."/>
        </authorList>
    </citation>
    <scope>NUCLEOTIDE SEQUENCE [LARGE SCALE GENOMIC DNA]</scope>
    <source>
        <strain>K12 / MG1655 / ATCC 47076</strain>
    </source>
</reference>
<reference key="2">
    <citation type="journal article" date="1997" name="Science">
        <title>The complete genome sequence of Escherichia coli K-12.</title>
        <authorList>
            <person name="Blattner F.R."/>
            <person name="Plunkett G. III"/>
            <person name="Bloch C.A."/>
            <person name="Perna N.T."/>
            <person name="Burland V."/>
            <person name="Riley M."/>
            <person name="Collado-Vides J."/>
            <person name="Glasner J.D."/>
            <person name="Rode C.K."/>
            <person name="Mayhew G.F."/>
            <person name="Gregor J."/>
            <person name="Davis N.W."/>
            <person name="Kirkpatrick H.A."/>
            <person name="Goeden M.A."/>
            <person name="Rose D.J."/>
            <person name="Mau B."/>
            <person name="Shao Y."/>
        </authorList>
    </citation>
    <scope>NUCLEOTIDE SEQUENCE [LARGE SCALE GENOMIC DNA]</scope>
    <scope>SEQUENCE REVISION TO C-TERMINUS</scope>
    <source>
        <strain>K12 / MG1655 / ATCC 47076</strain>
    </source>
</reference>
<reference key="3">
    <citation type="journal article" date="2006" name="Mol. Syst. Biol.">
        <title>Highly accurate genome sequences of Escherichia coli K-12 strains MG1655 and W3110.</title>
        <authorList>
            <person name="Hayashi K."/>
            <person name="Morooka N."/>
            <person name="Yamamoto Y."/>
            <person name="Fujita K."/>
            <person name="Isono K."/>
            <person name="Choi S."/>
            <person name="Ohtsubo E."/>
            <person name="Baba T."/>
            <person name="Wanner B.L."/>
            <person name="Mori H."/>
            <person name="Horiuchi T."/>
        </authorList>
    </citation>
    <scope>NUCLEOTIDE SEQUENCE [LARGE SCALE GENOMIC DNA]</scope>
    <source>
        <strain>K12 / W3110 / ATCC 27325 / DSM 5911</strain>
    </source>
</reference>
<reference key="4">
    <citation type="journal article" date="1996" name="Genome Sci. Technol.">
        <title>Novel phosphotransferases system genes revealed by bacterial genome analysis: operons encoding homologues of sugar-specific permease domains of the phosphotransferase system and pentose catabolic enzymes.</title>
        <authorList>
            <person name="Reizer J."/>
            <person name="Charbit A."/>
            <person name="Reizer A."/>
            <person name="Saier M.H. Jr."/>
        </authorList>
    </citation>
    <scope>DISCUSSION OF SEQUENCE</scope>
</reference>
<reference key="5">
    <citation type="journal article" date="2002" name="J. Bacteriol.">
        <title>The gene yjfQ encodes the repressor of the yjfR-X regulon (ula), which is involved in L-ascorbate metabolism in Escherichia coli.</title>
        <authorList>
            <person name="Campos E."/>
            <person name="Aguilar J."/>
            <person name="Baldoma L."/>
            <person name="Badia J."/>
        </authorList>
    </citation>
    <scope>TRANSCRIPTIONAL REGULATION</scope>
</reference>
<reference key="6">
    <citation type="journal article" date="2002" name="J. Bacteriol.">
        <title>Utilization of L-ascorbate by Escherichia coli K-12: assignments of functions to products of the yjf-sga and yia-sgb operons.</title>
        <authorList>
            <person name="Yew W.S."/>
            <person name="Gerlt J.A."/>
        </authorList>
    </citation>
    <scope>FUNCTION</scope>
    <scope>GENE NAME</scope>
</reference>
<reference key="7">
    <citation type="journal article" date="2003" name="J. Bacteriol.">
        <title>The ascorbate transporter of Escherichia coli.</title>
        <authorList>
            <person name="Zhang Z."/>
            <person name="Aboulwafa M."/>
            <person name="Smith M.H."/>
            <person name="Saier M.H. Jr."/>
        </authorList>
    </citation>
    <scope>FUNCTION</scope>
    <scope>BIOPHYSICOCHEMICAL PROPERTIES</scope>
    <scope>DISRUPTION PHENOTYPE</scope>
    <scope>INDUCTION</scope>
</reference>
<reference key="8">
    <citation type="journal article" date="2004" name="J. Bacteriol.">
        <title>Regulation of expression of the divergent ulaG and ulaABCDEF operons involved in L-ascorbate dissimilation in Escherichia coli.</title>
        <authorList>
            <person name="Campos E."/>
            <person name="Baldoma L."/>
            <person name="Aguilar J."/>
            <person name="Badia J."/>
        </authorList>
    </citation>
    <scope>TRANSCRIPTIONAL REGULATION</scope>
</reference>
<reference key="9">
    <citation type="journal article" date="2005" name="Science">
        <title>Global topology analysis of the Escherichia coli inner membrane proteome.</title>
        <authorList>
            <person name="Daley D.O."/>
            <person name="Rapp M."/>
            <person name="Granseth E."/>
            <person name="Melen K."/>
            <person name="Drew D."/>
            <person name="von Heijne G."/>
        </authorList>
    </citation>
    <scope>SUBCELLULAR LOCATION</scope>
    <source>
        <strain>K12 / MG1655 / ATCC 47076</strain>
    </source>
</reference>
<reference key="10">
    <citation type="journal article" date="2015" name="Nat. Struct. Mol. Biol.">
        <title>Crystal structure of a phosphorylation-coupled vitamin C transporter.</title>
        <authorList>
            <person name="Luo P."/>
            <person name="Yu X."/>
            <person name="Wang W."/>
            <person name="Fan S."/>
            <person name="Li X."/>
            <person name="Wang J."/>
        </authorList>
    </citation>
    <scope>X-RAY CRYSTALLOGRAPHY (1.65 ANGSTROMS) IN COMPLEX WITH ASCORBATE</scope>
    <scope>SUBUNIT</scope>
</reference>
<name>ULAA_ECOLI</name>
<gene>
    <name evidence="6" type="primary">ulaA</name>
    <name type="synonym">sgaT</name>
    <name type="synonym">yjfS</name>
    <name type="ordered locus">b4193</name>
    <name type="ordered locus">JW5744</name>
</gene>